<name>COAD_HAEI8</name>
<gene>
    <name evidence="1" type="primary">coaD</name>
    <name type="ordered locus">NTHI0771</name>
</gene>
<protein>
    <recommendedName>
        <fullName evidence="1">Phosphopantetheine adenylyltransferase</fullName>
        <ecNumber evidence="1">2.7.7.3</ecNumber>
    </recommendedName>
    <alternativeName>
        <fullName evidence="1">Dephospho-CoA pyrophosphorylase</fullName>
    </alternativeName>
    <alternativeName>
        <fullName evidence="1">Pantetheine-phosphate adenylyltransferase</fullName>
        <shortName evidence="1">PPAT</shortName>
    </alternativeName>
</protein>
<comment type="function">
    <text evidence="1">Reversibly transfers an adenylyl group from ATP to 4'-phosphopantetheine, yielding dephospho-CoA (dPCoA) and pyrophosphate.</text>
</comment>
<comment type="catalytic activity">
    <reaction evidence="1">
        <text>(R)-4'-phosphopantetheine + ATP + H(+) = 3'-dephospho-CoA + diphosphate</text>
        <dbReference type="Rhea" id="RHEA:19801"/>
        <dbReference type="ChEBI" id="CHEBI:15378"/>
        <dbReference type="ChEBI" id="CHEBI:30616"/>
        <dbReference type="ChEBI" id="CHEBI:33019"/>
        <dbReference type="ChEBI" id="CHEBI:57328"/>
        <dbReference type="ChEBI" id="CHEBI:61723"/>
        <dbReference type="EC" id="2.7.7.3"/>
    </reaction>
</comment>
<comment type="cofactor">
    <cofactor evidence="1">
        <name>Mg(2+)</name>
        <dbReference type="ChEBI" id="CHEBI:18420"/>
    </cofactor>
</comment>
<comment type="pathway">
    <text evidence="1">Cofactor biosynthesis; coenzyme A biosynthesis; CoA from (R)-pantothenate: step 4/5.</text>
</comment>
<comment type="subunit">
    <text evidence="1">Homohexamer.</text>
</comment>
<comment type="subcellular location">
    <subcellularLocation>
        <location evidence="1">Cytoplasm</location>
    </subcellularLocation>
</comment>
<comment type="similarity">
    <text evidence="1">Belongs to the bacterial CoaD family.</text>
</comment>
<sequence length="156" mass="17318">MTSVIYPGTFDPITNGHLDIIERSAVIFPRVLVAVANSPSKKPLFSLEERVELVRQSVAHLSNVEVFGFSDLLANVIKQHNISAIIRGVRTTTDFEYELQLAALNRLLTKGVDSLFFPPAEKWAFVSSTIVREIYLHGGDVAELVPEPVFNALKAR</sequence>
<feature type="chain" id="PRO_1000011152" description="Phosphopantetheine adenylyltransferase">
    <location>
        <begin position="1"/>
        <end position="156"/>
    </location>
</feature>
<feature type="binding site" evidence="1">
    <location>
        <begin position="9"/>
        <end position="10"/>
    </location>
    <ligand>
        <name>ATP</name>
        <dbReference type="ChEBI" id="CHEBI:30616"/>
    </ligand>
</feature>
<feature type="binding site" evidence="1">
    <location>
        <position position="9"/>
    </location>
    <ligand>
        <name>substrate</name>
    </ligand>
</feature>
<feature type="binding site" evidence="1">
    <location>
        <position position="17"/>
    </location>
    <ligand>
        <name>ATP</name>
        <dbReference type="ChEBI" id="CHEBI:30616"/>
    </ligand>
</feature>
<feature type="binding site" evidence="1">
    <location>
        <position position="41"/>
    </location>
    <ligand>
        <name>substrate</name>
    </ligand>
</feature>
<feature type="binding site" evidence="1">
    <location>
        <position position="73"/>
    </location>
    <ligand>
        <name>substrate</name>
    </ligand>
</feature>
<feature type="binding site" evidence="1">
    <location>
        <position position="87"/>
    </location>
    <ligand>
        <name>substrate</name>
    </ligand>
</feature>
<feature type="binding site" evidence="1">
    <location>
        <begin position="88"/>
        <end position="90"/>
    </location>
    <ligand>
        <name>ATP</name>
        <dbReference type="ChEBI" id="CHEBI:30616"/>
    </ligand>
</feature>
<feature type="binding site" evidence="1">
    <location>
        <position position="98"/>
    </location>
    <ligand>
        <name>ATP</name>
        <dbReference type="ChEBI" id="CHEBI:30616"/>
    </ligand>
</feature>
<feature type="binding site" evidence="1">
    <location>
        <begin position="123"/>
        <end position="129"/>
    </location>
    <ligand>
        <name>ATP</name>
        <dbReference type="ChEBI" id="CHEBI:30616"/>
    </ligand>
</feature>
<feature type="site" description="Transition state stabilizer" evidence="1">
    <location>
        <position position="17"/>
    </location>
</feature>
<evidence type="ECO:0000255" key="1">
    <source>
        <dbReference type="HAMAP-Rule" id="MF_00151"/>
    </source>
</evidence>
<reference key="1">
    <citation type="journal article" date="2005" name="J. Bacteriol.">
        <title>Genomic sequence of an otitis media isolate of nontypeable Haemophilus influenzae: comparative study with H. influenzae serotype d, strain KW20.</title>
        <authorList>
            <person name="Harrison A."/>
            <person name="Dyer D.W."/>
            <person name="Gillaspy A."/>
            <person name="Ray W.C."/>
            <person name="Mungur R."/>
            <person name="Carson M.B."/>
            <person name="Zhong H."/>
            <person name="Gipson J."/>
            <person name="Gipson M."/>
            <person name="Johnson L.S."/>
            <person name="Lewis L."/>
            <person name="Bakaletz L.O."/>
            <person name="Munson R.S. Jr."/>
        </authorList>
    </citation>
    <scope>NUCLEOTIDE SEQUENCE [LARGE SCALE GENOMIC DNA]</scope>
    <source>
        <strain>86-028NP</strain>
    </source>
</reference>
<accession>Q4QMR6</accession>
<dbReference type="EC" id="2.7.7.3" evidence="1"/>
<dbReference type="EMBL" id="CP000057">
    <property type="protein sequence ID" value="AAX87681.1"/>
    <property type="molecule type" value="Genomic_DNA"/>
</dbReference>
<dbReference type="RefSeq" id="WP_011272145.1">
    <property type="nucleotide sequence ID" value="NC_007146.2"/>
</dbReference>
<dbReference type="SMR" id="Q4QMR6"/>
<dbReference type="GeneID" id="93219651"/>
<dbReference type="KEGG" id="hit:NTHI0771"/>
<dbReference type="HOGENOM" id="CLU_100149_0_1_6"/>
<dbReference type="UniPathway" id="UPA00241">
    <property type="reaction ID" value="UER00355"/>
</dbReference>
<dbReference type="Proteomes" id="UP000002525">
    <property type="component" value="Chromosome"/>
</dbReference>
<dbReference type="GO" id="GO:0005737">
    <property type="term" value="C:cytoplasm"/>
    <property type="evidence" value="ECO:0007669"/>
    <property type="project" value="UniProtKB-SubCell"/>
</dbReference>
<dbReference type="GO" id="GO:0005524">
    <property type="term" value="F:ATP binding"/>
    <property type="evidence" value="ECO:0007669"/>
    <property type="project" value="UniProtKB-KW"/>
</dbReference>
<dbReference type="GO" id="GO:0004595">
    <property type="term" value="F:pantetheine-phosphate adenylyltransferase activity"/>
    <property type="evidence" value="ECO:0007669"/>
    <property type="project" value="UniProtKB-UniRule"/>
</dbReference>
<dbReference type="GO" id="GO:0015937">
    <property type="term" value="P:coenzyme A biosynthetic process"/>
    <property type="evidence" value="ECO:0007669"/>
    <property type="project" value="UniProtKB-UniRule"/>
</dbReference>
<dbReference type="CDD" id="cd02163">
    <property type="entry name" value="PPAT"/>
    <property type="match status" value="1"/>
</dbReference>
<dbReference type="Gene3D" id="3.40.50.620">
    <property type="entry name" value="HUPs"/>
    <property type="match status" value="1"/>
</dbReference>
<dbReference type="HAMAP" id="MF_00151">
    <property type="entry name" value="PPAT_bact"/>
    <property type="match status" value="1"/>
</dbReference>
<dbReference type="InterPro" id="IPR004821">
    <property type="entry name" value="Cyt_trans-like"/>
</dbReference>
<dbReference type="InterPro" id="IPR001980">
    <property type="entry name" value="PPAT"/>
</dbReference>
<dbReference type="InterPro" id="IPR014729">
    <property type="entry name" value="Rossmann-like_a/b/a_fold"/>
</dbReference>
<dbReference type="NCBIfam" id="TIGR01510">
    <property type="entry name" value="coaD_prev_kdtB"/>
    <property type="match status" value="1"/>
</dbReference>
<dbReference type="NCBIfam" id="TIGR00125">
    <property type="entry name" value="cyt_tran_rel"/>
    <property type="match status" value="1"/>
</dbReference>
<dbReference type="PANTHER" id="PTHR21342">
    <property type="entry name" value="PHOSPHOPANTETHEINE ADENYLYLTRANSFERASE"/>
    <property type="match status" value="1"/>
</dbReference>
<dbReference type="PANTHER" id="PTHR21342:SF1">
    <property type="entry name" value="PHOSPHOPANTETHEINE ADENYLYLTRANSFERASE"/>
    <property type="match status" value="1"/>
</dbReference>
<dbReference type="Pfam" id="PF01467">
    <property type="entry name" value="CTP_transf_like"/>
    <property type="match status" value="1"/>
</dbReference>
<dbReference type="PRINTS" id="PR01020">
    <property type="entry name" value="LPSBIOSNTHSS"/>
</dbReference>
<dbReference type="SUPFAM" id="SSF52374">
    <property type="entry name" value="Nucleotidylyl transferase"/>
    <property type="match status" value="1"/>
</dbReference>
<keyword id="KW-0067">ATP-binding</keyword>
<keyword id="KW-0173">Coenzyme A biosynthesis</keyword>
<keyword id="KW-0963">Cytoplasm</keyword>
<keyword id="KW-0460">Magnesium</keyword>
<keyword id="KW-0547">Nucleotide-binding</keyword>
<keyword id="KW-0548">Nucleotidyltransferase</keyword>
<keyword id="KW-0808">Transferase</keyword>
<organism>
    <name type="scientific">Haemophilus influenzae (strain 86-028NP)</name>
    <dbReference type="NCBI Taxonomy" id="281310"/>
    <lineage>
        <taxon>Bacteria</taxon>
        <taxon>Pseudomonadati</taxon>
        <taxon>Pseudomonadota</taxon>
        <taxon>Gammaproteobacteria</taxon>
        <taxon>Pasteurellales</taxon>
        <taxon>Pasteurellaceae</taxon>
        <taxon>Haemophilus</taxon>
    </lineage>
</organism>
<proteinExistence type="inferred from homology"/>